<proteinExistence type="predicted"/>
<keyword id="KW-0059">Arsenical resistance</keyword>
<keyword id="KW-0238">DNA-binding</keyword>
<keyword id="KW-0614">Plasmid</keyword>
<keyword id="KW-0678">Repressor</keyword>
<keyword id="KW-0804">Transcription</keyword>
<keyword id="KW-0805">Transcription regulation</keyword>
<dbReference type="EMBL" id="M86824">
    <property type="protein sequence ID" value="AAA25636.1"/>
    <property type="molecule type" value="Genomic_DNA"/>
</dbReference>
<dbReference type="PIR" id="B41903">
    <property type="entry name" value="B41903"/>
</dbReference>
<dbReference type="RefSeq" id="WP_000120606.1">
    <property type="nucleotide sequence ID" value="NZ_WKIV01000028.1"/>
</dbReference>
<dbReference type="RefSeq" id="YP_006937609.1">
    <property type="nucleotide sequence ID" value="NC_013319.1"/>
</dbReference>
<dbReference type="RefSeq" id="YP_006938163.1">
    <property type="nucleotide sequence ID" value="NC_013333.1"/>
</dbReference>
<dbReference type="RefSeq" id="YP_006938643.1">
    <property type="nucleotide sequence ID" value="NC_013347.1"/>
</dbReference>
<dbReference type="RefSeq" id="YP_006938777.1">
    <property type="nucleotide sequence ID" value="NC_013352.1"/>
</dbReference>
<dbReference type="SMR" id="P30338"/>
<dbReference type="GO" id="GO:0003677">
    <property type="term" value="F:DNA binding"/>
    <property type="evidence" value="ECO:0007669"/>
    <property type="project" value="UniProtKB-KW"/>
</dbReference>
<dbReference type="GO" id="GO:0003700">
    <property type="term" value="F:DNA-binding transcription factor activity"/>
    <property type="evidence" value="ECO:0007669"/>
    <property type="project" value="InterPro"/>
</dbReference>
<dbReference type="GO" id="GO:0046685">
    <property type="term" value="P:response to arsenic-containing substance"/>
    <property type="evidence" value="ECO:0007669"/>
    <property type="project" value="UniProtKB-KW"/>
</dbReference>
<dbReference type="CDD" id="cd00090">
    <property type="entry name" value="HTH_ARSR"/>
    <property type="match status" value="1"/>
</dbReference>
<dbReference type="Gene3D" id="1.10.10.10">
    <property type="entry name" value="Winged helix-like DNA-binding domain superfamily/Winged helix DNA-binding domain"/>
    <property type="match status" value="1"/>
</dbReference>
<dbReference type="InterPro" id="IPR011991">
    <property type="entry name" value="ArsR-like_HTH"/>
</dbReference>
<dbReference type="InterPro" id="IPR018334">
    <property type="entry name" value="ArsR_HTH"/>
</dbReference>
<dbReference type="InterPro" id="IPR001845">
    <property type="entry name" value="HTH_ArsR_DNA-bd_dom"/>
</dbReference>
<dbReference type="InterPro" id="IPR051081">
    <property type="entry name" value="HTH_MetalResp_TranReg"/>
</dbReference>
<dbReference type="InterPro" id="IPR036388">
    <property type="entry name" value="WH-like_DNA-bd_sf"/>
</dbReference>
<dbReference type="InterPro" id="IPR036390">
    <property type="entry name" value="WH_DNA-bd_sf"/>
</dbReference>
<dbReference type="NCBIfam" id="NF033788">
    <property type="entry name" value="HTH_metalloreg"/>
    <property type="match status" value="1"/>
</dbReference>
<dbReference type="PANTHER" id="PTHR33154:SF18">
    <property type="entry name" value="ARSENICAL RESISTANCE OPERON REPRESSOR"/>
    <property type="match status" value="1"/>
</dbReference>
<dbReference type="PANTHER" id="PTHR33154">
    <property type="entry name" value="TRANSCRIPTIONAL REGULATOR, ARSR FAMILY"/>
    <property type="match status" value="1"/>
</dbReference>
<dbReference type="Pfam" id="PF01022">
    <property type="entry name" value="HTH_5"/>
    <property type="match status" value="1"/>
</dbReference>
<dbReference type="PRINTS" id="PR00778">
    <property type="entry name" value="HTHARSR"/>
</dbReference>
<dbReference type="SMART" id="SM00418">
    <property type="entry name" value="HTH_ARSR"/>
    <property type="match status" value="1"/>
</dbReference>
<dbReference type="SUPFAM" id="SSF46785">
    <property type="entry name" value="Winged helix' DNA-binding domain"/>
    <property type="match status" value="1"/>
</dbReference>
<dbReference type="PROSITE" id="PS00846">
    <property type="entry name" value="HTH_ARSR_1"/>
    <property type="match status" value="1"/>
</dbReference>
<dbReference type="PROSITE" id="PS50987">
    <property type="entry name" value="HTH_ARSR_2"/>
    <property type="match status" value="1"/>
</dbReference>
<organism>
    <name type="scientific">Staphylococcus aureus</name>
    <dbReference type="NCBI Taxonomy" id="1280"/>
    <lineage>
        <taxon>Bacteria</taxon>
        <taxon>Bacillati</taxon>
        <taxon>Bacillota</taxon>
        <taxon>Bacilli</taxon>
        <taxon>Bacillales</taxon>
        <taxon>Staphylococcaceae</taxon>
        <taxon>Staphylococcus</taxon>
    </lineage>
</organism>
<gene>
    <name type="primary">arsR</name>
</gene>
<reference key="1">
    <citation type="journal article" date="1992" name="J. Bacteriol.">
        <title>Regulation and expression of the arsenic resistance operon from Staphylococcus aureus plasmid pI258.</title>
        <authorList>
            <person name="Ji G."/>
            <person name="Silver S."/>
        </authorList>
    </citation>
    <scope>NUCLEOTIDE SEQUENCE [GENOMIC DNA]</scope>
</reference>
<geneLocation type="plasmid">
    <name>pI258</name>
</geneLocation>
<comment type="function">
    <text>Transcriptional repressor for the ars operon. ArsR is a trans-acting regulatory protein which controls its own expression. The repressive effect of ArsR is alleviated by oxyions of +III oxidation state of arsenic, antimony, and bismuth, as well as arsenate (As(V)).</text>
</comment>
<feature type="chain" id="PRO_0000160614" description="Arsenical resistance operon repressor">
    <location>
        <begin position="1"/>
        <end position="104"/>
    </location>
</feature>
<feature type="domain" description="HTH arsR-type" evidence="1">
    <location>
        <begin position="1"/>
        <end position="92"/>
    </location>
</feature>
<feature type="DNA-binding region" description="H-T-H motif" evidence="1">
    <location>
        <begin position="32"/>
        <end position="51"/>
    </location>
</feature>
<protein>
    <recommendedName>
        <fullName>Arsenical resistance operon repressor</fullName>
    </recommendedName>
</protein>
<accession>P30338</accession>
<name>ARSR_STAAU</name>
<sequence>MSYKELSTILKILSDSSRLEILDLLSCGELCACDLLEHFQFSQPTLSHHMKSLVDNELVTTRKDGNKHWYQLNHAILDDIIQNLNIINTSNQRCVCKNVKSGDC</sequence>
<evidence type="ECO:0000255" key="1">
    <source>
        <dbReference type="PROSITE-ProRule" id="PRU00340"/>
    </source>
</evidence>